<name>MTNA_PSEPK</name>
<comment type="function">
    <text evidence="1">Catalyzes the interconversion of methylthioribose-1-phosphate (MTR-1-P) into methylthioribulose-1-phosphate (MTRu-1-P).</text>
</comment>
<comment type="catalytic activity">
    <reaction evidence="1">
        <text>5-(methylsulfanyl)-alpha-D-ribose 1-phosphate = 5-(methylsulfanyl)-D-ribulose 1-phosphate</text>
        <dbReference type="Rhea" id="RHEA:19989"/>
        <dbReference type="ChEBI" id="CHEBI:58533"/>
        <dbReference type="ChEBI" id="CHEBI:58548"/>
        <dbReference type="EC" id="5.3.1.23"/>
    </reaction>
</comment>
<comment type="pathway">
    <text evidence="1">Amino-acid biosynthesis; L-methionine biosynthesis via salvage pathway; L-methionine from S-methyl-5-thio-alpha-D-ribose 1-phosphate: step 1/6.</text>
</comment>
<comment type="similarity">
    <text evidence="2">Belongs to the eIF-2B alpha/beta/delta subunits family. MtnA subfamily.</text>
</comment>
<accession>Q88M09</accession>
<evidence type="ECO:0000255" key="1">
    <source>
        <dbReference type="HAMAP-Rule" id="MF_01678"/>
    </source>
</evidence>
<evidence type="ECO:0000305" key="2"/>
<feature type="chain" id="PRO_0000156098" description="Methylthioribose-1-phosphate isomerase">
    <location>
        <begin position="1"/>
        <end position="358"/>
    </location>
</feature>
<feature type="active site" description="Proton donor" evidence="1">
    <location>
        <position position="246"/>
    </location>
</feature>
<feature type="binding site" evidence="1">
    <location>
        <begin position="54"/>
        <end position="56"/>
    </location>
    <ligand>
        <name>substrate</name>
    </ligand>
</feature>
<feature type="binding site" evidence="1">
    <location>
        <position position="96"/>
    </location>
    <ligand>
        <name>substrate</name>
    </ligand>
</feature>
<feature type="binding site" evidence="1">
    <location>
        <position position="205"/>
    </location>
    <ligand>
        <name>substrate</name>
    </ligand>
</feature>
<feature type="binding site" evidence="1">
    <location>
        <begin position="256"/>
        <end position="257"/>
    </location>
    <ligand>
        <name>substrate</name>
    </ligand>
</feature>
<gene>
    <name evidence="1" type="primary">mtnA</name>
    <name type="ordered locus">PP_1766</name>
</gene>
<sequence length="358" mass="38652">MRERLLAAEKVTAIRWQGGALHLLDQRLLPSEERWLACDNVAQVAAAIRDMAVRGASAIGIAAAYGLVLALEERLAEGGDWEMDLEDDFLTLAEARPTAANLFWALNRMRERLLCLRPEEDVLAALEAEAVAIHDSDREANLTMAQQGIELIRRHQGNAQALLTFGNAGALASGGFGTALGVIRAGYLEGMVERVYAGETRPWLQGSRLTGWELANEGIPVTLCADSALAHLMKTKGITWVVVGADCIAANGDMAGKIGTYQLAVSAMHHGVRFMVVAPSTSIDLNLATGEDIPLEERDADEWLDFGGTPVSPGVEVFNPVFDVTPADLIDVIVTERGIVERPDAAKLAQLVCRKRLH</sequence>
<reference key="1">
    <citation type="journal article" date="2002" name="Environ. Microbiol.">
        <title>Complete genome sequence and comparative analysis of the metabolically versatile Pseudomonas putida KT2440.</title>
        <authorList>
            <person name="Nelson K.E."/>
            <person name="Weinel C."/>
            <person name="Paulsen I.T."/>
            <person name="Dodson R.J."/>
            <person name="Hilbert H."/>
            <person name="Martins dos Santos V.A.P."/>
            <person name="Fouts D.E."/>
            <person name="Gill S.R."/>
            <person name="Pop M."/>
            <person name="Holmes M."/>
            <person name="Brinkac L.M."/>
            <person name="Beanan M.J."/>
            <person name="DeBoy R.T."/>
            <person name="Daugherty S.C."/>
            <person name="Kolonay J.F."/>
            <person name="Madupu R."/>
            <person name="Nelson W.C."/>
            <person name="White O."/>
            <person name="Peterson J.D."/>
            <person name="Khouri H.M."/>
            <person name="Hance I."/>
            <person name="Chris Lee P."/>
            <person name="Holtzapple E.K."/>
            <person name="Scanlan D."/>
            <person name="Tran K."/>
            <person name="Moazzez A."/>
            <person name="Utterback T.R."/>
            <person name="Rizzo M."/>
            <person name="Lee K."/>
            <person name="Kosack D."/>
            <person name="Moestl D."/>
            <person name="Wedler H."/>
            <person name="Lauber J."/>
            <person name="Stjepandic D."/>
            <person name="Hoheisel J."/>
            <person name="Straetz M."/>
            <person name="Heim S."/>
            <person name="Kiewitz C."/>
            <person name="Eisen J.A."/>
            <person name="Timmis K.N."/>
            <person name="Duesterhoeft A."/>
            <person name="Tuemmler B."/>
            <person name="Fraser C.M."/>
        </authorList>
    </citation>
    <scope>NUCLEOTIDE SEQUENCE [LARGE SCALE GENOMIC DNA]</scope>
    <source>
        <strain>ATCC 47054 / DSM 6125 / CFBP 8728 / NCIMB 11950 / KT2440</strain>
    </source>
</reference>
<dbReference type="EC" id="5.3.1.23" evidence="1"/>
<dbReference type="EMBL" id="AE015451">
    <property type="protein sequence ID" value="AAN67386.1"/>
    <property type="molecule type" value="Genomic_DNA"/>
</dbReference>
<dbReference type="RefSeq" id="NP_743922.1">
    <property type="nucleotide sequence ID" value="NC_002947.4"/>
</dbReference>
<dbReference type="RefSeq" id="WP_010952804.1">
    <property type="nucleotide sequence ID" value="NZ_CP169744.1"/>
</dbReference>
<dbReference type="SMR" id="Q88M09"/>
<dbReference type="STRING" id="160488.PP_1766"/>
<dbReference type="PaxDb" id="160488-PP_1766"/>
<dbReference type="KEGG" id="ppu:PP_1766"/>
<dbReference type="PATRIC" id="fig|160488.4.peg.1862"/>
<dbReference type="eggNOG" id="COG0182">
    <property type="taxonomic scope" value="Bacteria"/>
</dbReference>
<dbReference type="HOGENOM" id="CLU_016218_1_2_6"/>
<dbReference type="OrthoDB" id="9803436at2"/>
<dbReference type="PhylomeDB" id="Q88M09"/>
<dbReference type="BioCyc" id="PPUT160488:G1G01-1867-MONOMER"/>
<dbReference type="UniPathway" id="UPA00904">
    <property type="reaction ID" value="UER00874"/>
</dbReference>
<dbReference type="Proteomes" id="UP000000556">
    <property type="component" value="Chromosome"/>
</dbReference>
<dbReference type="GO" id="GO:0046523">
    <property type="term" value="F:S-methyl-5-thioribose-1-phosphate isomerase activity"/>
    <property type="evidence" value="ECO:0007669"/>
    <property type="project" value="UniProtKB-UniRule"/>
</dbReference>
<dbReference type="GO" id="GO:0019509">
    <property type="term" value="P:L-methionine salvage from methylthioadenosine"/>
    <property type="evidence" value="ECO:0007669"/>
    <property type="project" value="UniProtKB-UniRule"/>
</dbReference>
<dbReference type="FunFam" id="1.20.120.420:FF:000008">
    <property type="entry name" value="Methylthioribose-1-phosphate isomerase"/>
    <property type="match status" value="1"/>
</dbReference>
<dbReference type="FunFam" id="3.40.50.10470:FF:000006">
    <property type="entry name" value="Methylthioribose-1-phosphate isomerase"/>
    <property type="match status" value="1"/>
</dbReference>
<dbReference type="Gene3D" id="1.20.120.420">
    <property type="entry name" value="translation initiation factor eif-2b, domain 1"/>
    <property type="match status" value="1"/>
</dbReference>
<dbReference type="Gene3D" id="3.40.50.10470">
    <property type="entry name" value="Translation initiation factor eif-2b, domain 2"/>
    <property type="match status" value="1"/>
</dbReference>
<dbReference type="HAMAP" id="MF_01678">
    <property type="entry name" value="Salvage_MtnA"/>
    <property type="match status" value="1"/>
</dbReference>
<dbReference type="InterPro" id="IPR000649">
    <property type="entry name" value="IF-2B-related"/>
</dbReference>
<dbReference type="InterPro" id="IPR005251">
    <property type="entry name" value="IF-M1Pi"/>
</dbReference>
<dbReference type="InterPro" id="IPR042529">
    <property type="entry name" value="IF_2B-like_C"/>
</dbReference>
<dbReference type="InterPro" id="IPR011559">
    <property type="entry name" value="Initiation_fac_2B_a/b/d"/>
</dbReference>
<dbReference type="InterPro" id="IPR027363">
    <property type="entry name" value="M1Pi_N"/>
</dbReference>
<dbReference type="InterPro" id="IPR037171">
    <property type="entry name" value="NagB/RpiA_transferase-like"/>
</dbReference>
<dbReference type="NCBIfam" id="TIGR00524">
    <property type="entry name" value="eIF-2B_rel"/>
    <property type="match status" value="1"/>
</dbReference>
<dbReference type="NCBIfam" id="NF004326">
    <property type="entry name" value="PRK05720.1"/>
    <property type="match status" value="1"/>
</dbReference>
<dbReference type="NCBIfam" id="TIGR00512">
    <property type="entry name" value="salvage_mtnA"/>
    <property type="match status" value="1"/>
</dbReference>
<dbReference type="PANTHER" id="PTHR43475">
    <property type="entry name" value="METHYLTHIORIBOSE-1-PHOSPHATE ISOMERASE"/>
    <property type="match status" value="1"/>
</dbReference>
<dbReference type="PANTHER" id="PTHR43475:SF1">
    <property type="entry name" value="METHYLTHIORIBOSE-1-PHOSPHATE ISOMERASE"/>
    <property type="match status" value="1"/>
</dbReference>
<dbReference type="Pfam" id="PF01008">
    <property type="entry name" value="IF-2B"/>
    <property type="match status" value="1"/>
</dbReference>
<dbReference type="SUPFAM" id="SSF100950">
    <property type="entry name" value="NagB/RpiA/CoA transferase-like"/>
    <property type="match status" value="1"/>
</dbReference>
<keyword id="KW-0028">Amino-acid biosynthesis</keyword>
<keyword id="KW-0413">Isomerase</keyword>
<keyword id="KW-0486">Methionine biosynthesis</keyword>
<keyword id="KW-1185">Reference proteome</keyword>
<proteinExistence type="inferred from homology"/>
<protein>
    <recommendedName>
        <fullName evidence="1">Methylthioribose-1-phosphate isomerase</fullName>
        <shortName evidence="1">M1Pi</shortName>
        <shortName evidence="1">MTR-1-P isomerase</shortName>
        <ecNumber evidence="1">5.3.1.23</ecNumber>
    </recommendedName>
    <alternativeName>
        <fullName evidence="1">S-methyl-5-thioribose-1-phosphate isomerase</fullName>
    </alternativeName>
</protein>
<organism>
    <name type="scientific">Pseudomonas putida (strain ATCC 47054 / DSM 6125 / CFBP 8728 / NCIMB 11950 / KT2440)</name>
    <dbReference type="NCBI Taxonomy" id="160488"/>
    <lineage>
        <taxon>Bacteria</taxon>
        <taxon>Pseudomonadati</taxon>
        <taxon>Pseudomonadota</taxon>
        <taxon>Gammaproteobacteria</taxon>
        <taxon>Pseudomonadales</taxon>
        <taxon>Pseudomonadaceae</taxon>
        <taxon>Pseudomonas</taxon>
    </lineage>
</organism>